<organism>
    <name type="scientific">Prochlorococcus marinus (strain MIT 9313)</name>
    <dbReference type="NCBI Taxonomy" id="74547"/>
    <lineage>
        <taxon>Bacteria</taxon>
        <taxon>Bacillati</taxon>
        <taxon>Cyanobacteriota</taxon>
        <taxon>Cyanophyceae</taxon>
        <taxon>Synechococcales</taxon>
        <taxon>Prochlorococcaceae</taxon>
        <taxon>Prochlorococcus</taxon>
    </lineage>
</organism>
<evidence type="ECO:0000255" key="1">
    <source>
        <dbReference type="PROSITE-ProRule" id="PRU01278"/>
    </source>
</evidence>
<evidence type="ECO:0000256" key="2">
    <source>
        <dbReference type="SAM" id="MobiDB-lite"/>
    </source>
</evidence>
<evidence type="ECO:0000303" key="3">
    <source>
    </source>
</evidence>
<evidence type="ECO:0000305" key="4"/>
<evidence type="ECO:0000305" key="5">
    <source>
    </source>
</evidence>
<name>CSOSE_PROMM</name>
<comment type="function">
    <text evidence="5">A probable carboxysomal shell protein found only in Prochlorococcus and Synechococcus strains that grow in low light.</text>
</comment>
<comment type="subunit">
    <text evidence="4">Homohexamer.</text>
</comment>
<comment type="subcellular location">
    <subcellularLocation>
        <location evidence="5">Carboxysome</location>
    </subcellularLocation>
    <text evidence="4">This cyanobacterium makes alpha-type carboxysomes.</text>
</comment>
<comment type="similarity">
    <text evidence="1">Belongs to the bacterial microcompartments protein family.</text>
</comment>
<feature type="chain" id="PRO_0000452078" description="Probable carboxysome shell protein CsoS1E">
    <location>
        <begin position="1"/>
        <end position="204"/>
    </location>
</feature>
<feature type="domain" description="BMC" evidence="1">
    <location>
        <begin position="111"/>
        <end position="196"/>
    </location>
</feature>
<feature type="region of interest" description="Disordered" evidence="2">
    <location>
        <begin position="1"/>
        <end position="102"/>
    </location>
</feature>
<feature type="compositionally biased region" description="Low complexity" evidence="2">
    <location>
        <begin position="1"/>
        <end position="14"/>
    </location>
</feature>
<feature type="compositionally biased region" description="Low complexity" evidence="2">
    <location>
        <begin position="41"/>
        <end position="84"/>
    </location>
</feature>
<feature type="compositionally biased region" description="Low complexity" evidence="2">
    <location>
        <begin position="92"/>
        <end position="102"/>
    </location>
</feature>
<reference key="1">
    <citation type="journal article" date="2003" name="Nature">
        <title>Genome divergence in two Prochlorococcus ecotypes reflects oceanic niche differentiation.</title>
        <authorList>
            <person name="Rocap G."/>
            <person name="Larimer F.W."/>
            <person name="Lamerdin J.E."/>
            <person name="Malfatti S."/>
            <person name="Chain P."/>
            <person name="Ahlgren N.A."/>
            <person name="Arellano A."/>
            <person name="Coleman M."/>
            <person name="Hauser L."/>
            <person name="Hess W.R."/>
            <person name="Johnson Z.I."/>
            <person name="Land M.L."/>
            <person name="Lindell D."/>
            <person name="Post A.F."/>
            <person name="Regala W."/>
            <person name="Shah M."/>
            <person name="Shaw S.L."/>
            <person name="Steglich C."/>
            <person name="Sullivan M.B."/>
            <person name="Ting C.S."/>
            <person name="Tolonen A."/>
            <person name="Webb E.A."/>
            <person name="Zinser E.R."/>
            <person name="Chisholm S.W."/>
        </authorList>
    </citation>
    <scope>NUCLEOTIDE SEQUENCE [LARGE SCALE GENOMIC DNA]</scope>
    <source>
        <strain>MIT 9313</strain>
    </source>
</reference>
<reference key="2">
    <citation type="journal article" date="2012" name="J. Bacteriol.">
        <title>Isolation and characterization of the Prochlorococcus carboxysome reveal the presence of the novel shell protein CsoS1D.</title>
        <authorList>
            <person name="Roberts E.W."/>
            <person name="Cai F."/>
            <person name="Kerfeld C.A."/>
            <person name="Cannon G.C."/>
            <person name="Heinhorst S."/>
        </authorList>
    </citation>
    <scope>DISCUSSION OF SEQUENCE</scope>
    <scope>SUBCELLULAR LOCATION</scope>
    <source>
        <strain>MIT 9313</strain>
    </source>
</reference>
<protein>
    <recommendedName>
        <fullName evidence="3">Probable carboxysome shell protein CsoS1E</fullName>
    </recommendedName>
</protein>
<gene>
    <name evidence="3" type="primary">csoS1E</name>
    <name type="ordered locus">PMT_1199</name>
</gene>
<proteinExistence type="inferred from homology"/>
<keyword id="KW-1283">Bacterial microcompartment</keyword>
<keyword id="KW-0120">Carbon dioxide fixation</keyword>
<keyword id="KW-1282">Carboxysome</keyword>
<keyword id="KW-0602">Photosynthesis</keyword>
<keyword id="KW-1185">Reference proteome</keyword>
<dbReference type="EMBL" id="BX548175">
    <property type="protein sequence ID" value="CAE21374.1"/>
    <property type="molecule type" value="Genomic_DNA"/>
</dbReference>
<dbReference type="SMR" id="Q7V6G4"/>
<dbReference type="KEGG" id="pmt:PMT_1199"/>
<dbReference type="eggNOG" id="COG4577">
    <property type="taxonomic scope" value="Bacteria"/>
</dbReference>
<dbReference type="HOGENOM" id="CLU_064903_1_0_3"/>
<dbReference type="Proteomes" id="UP000001423">
    <property type="component" value="Chromosome"/>
</dbReference>
<dbReference type="GO" id="GO:0031470">
    <property type="term" value="C:carboxysome"/>
    <property type="evidence" value="ECO:0007669"/>
    <property type="project" value="UniProtKB-SubCell"/>
</dbReference>
<dbReference type="GO" id="GO:0043886">
    <property type="term" value="F:structural constituent of carboxysome shell"/>
    <property type="evidence" value="ECO:0007669"/>
    <property type="project" value="UniProtKB-ARBA"/>
</dbReference>
<dbReference type="GO" id="GO:0015977">
    <property type="term" value="P:carbon fixation"/>
    <property type="evidence" value="ECO:0007669"/>
    <property type="project" value="UniProtKB-KW"/>
</dbReference>
<dbReference type="GO" id="GO:0015979">
    <property type="term" value="P:photosynthesis"/>
    <property type="evidence" value="ECO:0007669"/>
    <property type="project" value="UniProtKB-KW"/>
</dbReference>
<dbReference type="CDD" id="cd07058">
    <property type="entry name" value="BMC_CsoS1"/>
    <property type="match status" value="1"/>
</dbReference>
<dbReference type="Gene3D" id="3.30.70.1710">
    <property type="match status" value="1"/>
</dbReference>
<dbReference type="InterPro" id="IPR020808">
    <property type="entry name" value="Bact_microcomp_CS"/>
</dbReference>
<dbReference type="InterPro" id="IPR000249">
    <property type="entry name" value="BMC_dom"/>
</dbReference>
<dbReference type="InterPro" id="IPR050575">
    <property type="entry name" value="BMC_shell"/>
</dbReference>
<dbReference type="InterPro" id="IPR037233">
    <property type="entry name" value="CcmK-like_sf"/>
</dbReference>
<dbReference type="InterPro" id="IPR044872">
    <property type="entry name" value="CcmK/CsoS1_BMC"/>
</dbReference>
<dbReference type="PANTHER" id="PTHR33941:SF11">
    <property type="entry name" value="BACTERIAL MICROCOMPARTMENT SHELL PROTEIN PDUJ"/>
    <property type="match status" value="1"/>
</dbReference>
<dbReference type="PANTHER" id="PTHR33941">
    <property type="entry name" value="PROPANEDIOL UTILIZATION PROTEIN PDUA"/>
    <property type="match status" value="1"/>
</dbReference>
<dbReference type="Pfam" id="PF00936">
    <property type="entry name" value="BMC"/>
    <property type="match status" value="1"/>
</dbReference>
<dbReference type="SMART" id="SM00877">
    <property type="entry name" value="BMC"/>
    <property type="match status" value="1"/>
</dbReference>
<dbReference type="SUPFAM" id="SSF143414">
    <property type="entry name" value="CcmK-like"/>
    <property type="match status" value="1"/>
</dbReference>
<dbReference type="PROSITE" id="PS01139">
    <property type="entry name" value="BMC_1"/>
    <property type="match status" value="1"/>
</dbReference>
<dbReference type="PROSITE" id="PS51930">
    <property type="entry name" value="BMC_2"/>
    <property type="match status" value="1"/>
</dbReference>
<accession>Q7V6G4</accession>
<sequence>MPKPSSSSSSDSPSLTTAKPAGSEVAKKVLPAKATQTVDVSASTSSLSGSKSTTRRSAATGRTSASRATAATPASRGGKSAAGSSGSGSASGGAIKPPASSSVPSFVQGIALGMIETRGMVPAIEAADAMTKAAEVNLISREYVGGGYVTVMVRGETGAVNAAVRAGADACERVGDGLVAAHIIARPHQEVEPALRPTHAKRRS</sequence>